<evidence type="ECO:0000255" key="1">
    <source>
        <dbReference type="HAMAP-Rule" id="MF_00735"/>
    </source>
</evidence>
<evidence type="ECO:0000305" key="2"/>
<keyword id="KW-0963">Cytoplasm</keyword>
<keyword id="KW-0489">Methyltransferase</keyword>
<keyword id="KW-1185">Reference proteome</keyword>
<keyword id="KW-0949">S-adenosyl-L-methionine</keyword>
<keyword id="KW-0808">Transferase</keyword>
<gene>
    <name evidence="1" type="primary">prmA</name>
    <name type="ordered locus">SF3297</name>
    <name type="ordered locus">S3514</name>
</gene>
<organism>
    <name type="scientific">Shigella flexneri</name>
    <dbReference type="NCBI Taxonomy" id="623"/>
    <lineage>
        <taxon>Bacteria</taxon>
        <taxon>Pseudomonadati</taxon>
        <taxon>Pseudomonadota</taxon>
        <taxon>Gammaproteobacteria</taxon>
        <taxon>Enterobacterales</taxon>
        <taxon>Enterobacteriaceae</taxon>
        <taxon>Shigella</taxon>
    </lineage>
</organism>
<name>PRMA_SHIFL</name>
<dbReference type="EC" id="2.1.1.-" evidence="1"/>
<dbReference type="EMBL" id="AE005674">
    <property type="protein sequence ID" value="AAN44761.1"/>
    <property type="molecule type" value="Genomic_DNA"/>
</dbReference>
<dbReference type="EMBL" id="AE014073">
    <property type="protein sequence ID" value="AAP18572.1"/>
    <property type="molecule type" value="Genomic_DNA"/>
</dbReference>
<dbReference type="RefSeq" id="NP_709054.1">
    <property type="nucleotide sequence ID" value="NC_004337.2"/>
</dbReference>
<dbReference type="RefSeq" id="WP_001145827.1">
    <property type="nucleotide sequence ID" value="NZ_WPGW01000026.1"/>
</dbReference>
<dbReference type="SMR" id="P0A8T4"/>
<dbReference type="STRING" id="198214.SF3297"/>
<dbReference type="PaxDb" id="198214-SF3297"/>
<dbReference type="GeneID" id="1027044"/>
<dbReference type="GeneID" id="75206107"/>
<dbReference type="KEGG" id="sfl:SF3297"/>
<dbReference type="KEGG" id="sfx:S3514"/>
<dbReference type="PATRIC" id="fig|198214.7.peg.3905"/>
<dbReference type="HOGENOM" id="CLU_049382_4_1_6"/>
<dbReference type="Proteomes" id="UP000001006">
    <property type="component" value="Chromosome"/>
</dbReference>
<dbReference type="Proteomes" id="UP000002673">
    <property type="component" value="Chromosome"/>
</dbReference>
<dbReference type="GO" id="GO:0005829">
    <property type="term" value="C:cytosol"/>
    <property type="evidence" value="ECO:0007669"/>
    <property type="project" value="TreeGrafter"/>
</dbReference>
<dbReference type="GO" id="GO:0016279">
    <property type="term" value="F:protein-lysine N-methyltransferase activity"/>
    <property type="evidence" value="ECO:0007669"/>
    <property type="project" value="TreeGrafter"/>
</dbReference>
<dbReference type="GO" id="GO:0032259">
    <property type="term" value="P:methylation"/>
    <property type="evidence" value="ECO:0007669"/>
    <property type="project" value="UniProtKB-KW"/>
</dbReference>
<dbReference type="CDD" id="cd02440">
    <property type="entry name" value="AdoMet_MTases"/>
    <property type="match status" value="1"/>
</dbReference>
<dbReference type="FunFam" id="3.40.50.150:FF:000021">
    <property type="entry name" value="Ribosomal protein L11 methyltransferase"/>
    <property type="match status" value="1"/>
</dbReference>
<dbReference type="Gene3D" id="3.40.50.150">
    <property type="entry name" value="Vaccinia Virus protein VP39"/>
    <property type="match status" value="1"/>
</dbReference>
<dbReference type="HAMAP" id="MF_00735">
    <property type="entry name" value="Methyltr_PrmA"/>
    <property type="match status" value="1"/>
</dbReference>
<dbReference type="InterPro" id="IPR050078">
    <property type="entry name" value="Ribosomal_L11_MeTrfase_PrmA"/>
</dbReference>
<dbReference type="InterPro" id="IPR004498">
    <property type="entry name" value="Ribosomal_PrmA_MeTrfase"/>
</dbReference>
<dbReference type="InterPro" id="IPR029063">
    <property type="entry name" value="SAM-dependent_MTases_sf"/>
</dbReference>
<dbReference type="NCBIfam" id="TIGR00406">
    <property type="entry name" value="prmA"/>
    <property type="match status" value="1"/>
</dbReference>
<dbReference type="PANTHER" id="PTHR43648">
    <property type="entry name" value="ELECTRON TRANSFER FLAVOPROTEIN BETA SUBUNIT LYSINE METHYLTRANSFERASE"/>
    <property type="match status" value="1"/>
</dbReference>
<dbReference type="PANTHER" id="PTHR43648:SF1">
    <property type="entry name" value="ELECTRON TRANSFER FLAVOPROTEIN BETA SUBUNIT LYSINE METHYLTRANSFERASE"/>
    <property type="match status" value="1"/>
</dbReference>
<dbReference type="Pfam" id="PF06325">
    <property type="entry name" value="PrmA"/>
    <property type="match status" value="1"/>
</dbReference>
<dbReference type="PIRSF" id="PIRSF000401">
    <property type="entry name" value="RPL11_MTase"/>
    <property type="match status" value="1"/>
</dbReference>
<dbReference type="SUPFAM" id="SSF53335">
    <property type="entry name" value="S-adenosyl-L-methionine-dependent methyltransferases"/>
    <property type="match status" value="1"/>
</dbReference>
<comment type="function">
    <text evidence="1">Methylates ribosomal protein L11.</text>
</comment>
<comment type="catalytic activity">
    <reaction evidence="1">
        <text>L-lysyl-[protein] + 3 S-adenosyl-L-methionine = N(6),N(6),N(6)-trimethyl-L-lysyl-[protein] + 3 S-adenosyl-L-homocysteine + 3 H(+)</text>
        <dbReference type="Rhea" id="RHEA:54192"/>
        <dbReference type="Rhea" id="RHEA-COMP:9752"/>
        <dbReference type="Rhea" id="RHEA-COMP:13826"/>
        <dbReference type="ChEBI" id="CHEBI:15378"/>
        <dbReference type="ChEBI" id="CHEBI:29969"/>
        <dbReference type="ChEBI" id="CHEBI:57856"/>
        <dbReference type="ChEBI" id="CHEBI:59789"/>
        <dbReference type="ChEBI" id="CHEBI:61961"/>
    </reaction>
</comment>
<comment type="subcellular location">
    <subcellularLocation>
        <location evidence="1">Cytoplasm</location>
    </subcellularLocation>
</comment>
<comment type="similarity">
    <text evidence="1 2">Belongs to the methyltransferase superfamily. PrmA family.</text>
</comment>
<accession>P0A8T4</accession>
<accession>P28637</accession>
<accession>P76680</accession>
<accession>P76681</accession>
<proteinExistence type="inferred from homology"/>
<protein>
    <recommendedName>
        <fullName evidence="1">Ribosomal protein L11 methyltransferase</fullName>
        <shortName evidence="1">L11 Mtase</shortName>
        <ecNumber evidence="1">2.1.1.-</ecNumber>
    </recommendedName>
</protein>
<reference key="1">
    <citation type="journal article" date="2002" name="Nucleic Acids Res.">
        <title>Genome sequence of Shigella flexneri 2a: insights into pathogenicity through comparison with genomes of Escherichia coli K12 and O157.</title>
        <authorList>
            <person name="Jin Q."/>
            <person name="Yuan Z."/>
            <person name="Xu J."/>
            <person name="Wang Y."/>
            <person name="Shen Y."/>
            <person name="Lu W."/>
            <person name="Wang J."/>
            <person name="Liu H."/>
            <person name="Yang J."/>
            <person name="Yang F."/>
            <person name="Zhang X."/>
            <person name="Zhang J."/>
            <person name="Yang G."/>
            <person name="Wu H."/>
            <person name="Qu D."/>
            <person name="Dong J."/>
            <person name="Sun L."/>
            <person name="Xue Y."/>
            <person name="Zhao A."/>
            <person name="Gao Y."/>
            <person name="Zhu J."/>
            <person name="Kan B."/>
            <person name="Ding K."/>
            <person name="Chen S."/>
            <person name="Cheng H."/>
            <person name="Yao Z."/>
            <person name="He B."/>
            <person name="Chen R."/>
            <person name="Ma D."/>
            <person name="Qiang B."/>
            <person name="Wen Y."/>
            <person name="Hou Y."/>
            <person name="Yu J."/>
        </authorList>
    </citation>
    <scope>NUCLEOTIDE SEQUENCE [LARGE SCALE GENOMIC DNA]</scope>
    <source>
        <strain>301 / Serotype 2a</strain>
    </source>
</reference>
<reference key="2">
    <citation type="journal article" date="2003" name="Infect. Immun.">
        <title>Complete genome sequence and comparative genomics of Shigella flexneri serotype 2a strain 2457T.</title>
        <authorList>
            <person name="Wei J."/>
            <person name="Goldberg M.B."/>
            <person name="Burland V."/>
            <person name="Venkatesan M.M."/>
            <person name="Deng W."/>
            <person name="Fournier G."/>
            <person name="Mayhew G.F."/>
            <person name="Plunkett G. III"/>
            <person name="Rose D.J."/>
            <person name="Darling A."/>
            <person name="Mau B."/>
            <person name="Perna N.T."/>
            <person name="Payne S.M."/>
            <person name="Runyen-Janecky L.J."/>
            <person name="Zhou S."/>
            <person name="Schwartz D.C."/>
            <person name="Blattner F.R."/>
        </authorList>
    </citation>
    <scope>NUCLEOTIDE SEQUENCE [LARGE SCALE GENOMIC DNA]</scope>
    <source>
        <strain>ATCC 700930 / 2457T / Serotype 2a</strain>
    </source>
</reference>
<sequence length="293" mass="31877">MPWIQLKLNTTGANAEDLSDALMEAGAVSITFQDTHDTPVFEPLPGETRLWGDTDVIGLFDAETDMNDVVAILENHPLLGAGFAHKIEQLEDKDWEREWMDNFHPMRFGERLWICPSWRDVPDENAVNVMLDPGLAFGTGTHPTTSLCLQWLDSLDLTGKTVIDFGCGSGILAIAALKLGAAKAIGIDIDPQAIQASRDNAERNGVSDRLELYLPKDQPEEMKADVVVANILAGPLRELAPLISVLPVSGGLLGLSGILASQAESVCEAYADSFALDPVVEKEEWCRITGRKN</sequence>
<feature type="chain" id="PRO_0000192301" description="Ribosomal protein L11 methyltransferase">
    <location>
        <begin position="1"/>
        <end position="293"/>
    </location>
</feature>
<feature type="binding site" evidence="1">
    <location>
        <position position="145"/>
    </location>
    <ligand>
        <name>S-adenosyl-L-methionine</name>
        <dbReference type="ChEBI" id="CHEBI:59789"/>
    </ligand>
</feature>
<feature type="binding site" evidence="1">
    <location>
        <position position="166"/>
    </location>
    <ligand>
        <name>S-adenosyl-L-methionine</name>
        <dbReference type="ChEBI" id="CHEBI:59789"/>
    </ligand>
</feature>
<feature type="binding site" evidence="1">
    <location>
        <position position="188"/>
    </location>
    <ligand>
        <name>S-adenosyl-L-methionine</name>
        <dbReference type="ChEBI" id="CHEBI:59789"/>
    </ligand>
</feature>
<feature type="binding site" evidence="1">
    <location>
        <position position="230"/>
    </location>
    <ligand>
        <name>S-adenosyl-L-methionine</name>
        <dbReference type="ChEBI" id="CHEBI:59789"/>
    </ligand>
</feature>